<keyword id="KW-0131">Cell cycle</keyword>
<keyword id="KW-0132">Cell division</keyword>
<keyword id="KW-0963">Cytoplasm</keyword>
<keyword id="KW-1185">Reference proteome</keyword>
<keyword id="KW-0717">Septation</keyword>
<gene>
    <name evidence="1" type="primary">sepF</name>
    <name type="ordered locus">BLA_0810</name>
</gene>
<organism>
    <name type="scientific">Bifidobacterium animalis subsp. lactis (strain AD011)</name>
    <dbReference type="NCBI Taxonomy" id="442563"/>
    <lineage>
        <taxon>Bacteria</taxon>
        <taxon>Bacillati</taxon>
        <taxon>Actinomycetota</taxon>
        <taxon>Actinomycetes</taxon>
        <taxon>Bifidobacteriales</taxon>
        <taxon>Bifidobacteriaceae</taxon>
        <taxon>Bifidobacterium</taxon>
    </lineage>
</organism>
<evidence type="ECO:0000255" key="1">
    <source>
        <dbReference type="HAMAP-Rule" id="MF_01197"/>
    </source>
</evidence>
<evidence type="ECO:0000256" key="2">
    <source>
        <dbReference type="SAM" id="MobiDB-lite"/>
    </source>
</evidence>
<sequence>MAGFMKRTMSYLGMSDVVPEDEDDEVIDEEPESSFDTDRSVTPIPAASTQPSTSQRKSVAPFHANINRITTIHPQSYEDAQLVGRALRDGIPVVLNLTDVSQSQAYRIIDFSSGVVFGISGSIERVTERVFLLSPARVDIVAEDTESGMSDNLFEN</sequence>
<protein>
    <recommendedName>
        <fullName evidence="1">Cell division protein SepF</fullName>
    </recommendedName>
</protein>
<comment type="function">
    <text evidence="1">Cell division protein that is part of the divisome complex and is recruited early to the Z-ring. Probably stimulates Z-ring formation, perhaps through the cross-linking of FtsZ protofilaments. Its function overlaps with FtsA.</text>
</comment>
<comment type="subunit">
    <text evidence="1">Homodimer. Interacts with FtsZ.</text>
</comment>
<comment type="subcellular location">
    <subcellularLocation>
        <location evidence="1">Cytoplasm</location>
    </subcellularLocation>
    <text evidence="1">Localizes to the division site, in a FtsZ-dependent manner.</text>
</comment>
<comment type="similarity">
    <text evidence="1">Belongs to the SepF family.</text>
</comment>
<dbReference type="EMBL" id="CP001213">
    <property type="protein sequence ID" value="ACL29102.1"/>
    <property type="molecule type" value="Genomic_DNA"/>
</dbReference>
<dbReference type="RefSeq" id="WP_004218599.1">
    <property type="nucleotide sequence ID" value="NC_011835.1"/>
</dbReference>
<dbReference type="SMR" id="B8DSX3"/>
<dbReference type="STRING" id="442563.BLA_0810"/>
<dbReference type="KEGG" id="bla:BLA_0810"/>
<dbReference type="HOGENOM" id="CLU_078499_0_2_11"/>
<dbReference type="Proteomes" id="UP000002456">
    <property type="component" value="Chromosome"/>
</dbReference>
<dbReference type="GO" id="GO:0005737">
    <property type="term" value="C:cytoplasm"/>
    <property type="evidence" value="ECO:0007669"/>
    <property type="project" value="UniProtKB-SubCell"/>
</dbReference>
<dbReference type="GO" id="GO:0000917">
    <property type="term" value="P:division septum assembly"/>
    <property type="evidence" value="ECO:0007669"/>
    <property type="project" value="UniProtKB-KW"/>
</dbReference>
<dbReference type="GO" id="GO:0043093">
    <property type="term" value="P:FtsZ-dependent cytokinesis"/>
    <property type="evidence" value="ECO:0007669"/>
    <property type="project" value="UniProtKB-UniRule"/>
</dbReference>
<dbReference type="Gene3D" id="3.30.110.150">
    <property type="entry name" value="SepF-like protein"/>
    <property type="match status" value="1"/>
</dbReference>
<dbReference type="HAMAP" id="MF_01197">
    <property type="entry name" value="SepF"/>
    <property type="match status" value="1"/>
</dbReference>
<dbReference type="InterPro" id="IPR023052">
    <property type="entry name" value="Cell_div_SepF"/>
</dbReference>
<dbReference type="InterPro" id="IPR007561">
    <property type="entry name" value="Cell_div_SepF/SepF-rel"/>
</dbReference>
<dbReference type="InterPro" id="IPR038594">
    <property type="entry name" value="SepF-like_sf"/>
</dbReference>
<dbReference type="PANTHER" id="PTHR35798">
    <property type="entry name" value="CELL DIVISION PROTEIN SEPF"/>
    <property type="match status" value="1"/>
</dbReference>
<dbReference type="PANTHER" id="PTHR35798:SF1">
    <property type="entry name" value="CELL DIVISION PROTEIN SEPF"/>
    <property type="match status" value="1"/>
</dbReference>
<dbReference type="Pfam" id="PF04472">
    <property type="entry name" value="SepF"/>
    <property type="match status" value="1"/>
</dbReference>
<accession>B8DSX3</accession>
<reference key="1">
    <citation type="journal article" date="2009" name="J. Bacteriol.">
        <title>Genome sequence of the probiotic bacterium Bifidobacterium animalis subsp. lactis AD011.</title>
        <authorList>
            <person name="Kim J.F."/>
            <person name="Jeong H."/>
            <person name="Yu D.S."/>
            <person name="Choi S.-H."/>
            <person name="Hur C.-G."/>
            <person name="Park M.-S."/>
            <person name="Yoon S.H."/>
            <person name="Kim D.-W."/>
            <person name="Ji G.E."/>
            <person name="Park H.-S."/>
            <person name="Oh T.K."/>
        </authorList>
    </citation>
    <scope>NUCLEOTIDE SEQUENCE [LARGE SCALE GENOMIC DNA]</scope>
    <source>
        <strain>AD011</strain>
    </source>
</reference>
<proteinExistence type="inferred from homology"/>
<name>SEPF_BIFA0</name>
<feature type="chain" id="PRO_1000164528" description="Cell division protein SepF">
    <location>
        <begin position="1"/>
        <end position="156"/>
    </location>
</feature>
<feature type="region of interest" description="Disordered" evidence="2">
    <location>
        <begin position="15"/>
        <end position="58"/>
    </location>
</feature>
<feature type="compositionally biased region" description="Acidic residues" evidence="2">
    <location>
        <begin position="18"/>
        <end position="35"/>
    </location>
</feature>
<feature type="compositionally biased region" description="Polar residues" evidence="2">
    <location>
        <begin position="47"/>
        <end position="57"/>
    </location>
</feature>